<sequence>MRASAGERERVEALYAWERRLQRQGVARIAGVDEAGRGPLAGPVTAAAVILPPGLFIAGLNDSKKVPPARRRELAAVIKKESLAWGIGWVSVKEIDCLNILAASRWAMRRALSALAIRPDHVLIDGMELPGLKIPQTPLVGGDALSASIAAASILAKVARDELMVAYDAVFQGYGLAGNKGYPTREHREALRRLGPCALHRRSFKH</sequence>
<evidence type="ECO:0000255" key="1">
    <source>
        <dbReference type="HAMAP-Rule" id="MF_00052"/>
    </source>
</evidence>
<evidence type="ECO:0000255" key="2">
    <source>
        <dbReference type="PROSITE-ProRule" id="PRU01319"/>
    </source>
</evidence>
<gene>
    <name evidence="1" type="primary">rnhB</name>
    <name type="ordered locus">Moth_0976</name>
</gene>
<proteinExistence type="inferred from homology"/>
<dbReference type="EC" id="3.1.26.4" evidence="1"/>
<dbReference type="EMBL" id="CP000232">
    <property type="protein sequence ID" value="ABC19291.1"/>
    <property type="molecule type" value="Genomic_DNA"/>
</dbReference>
<dbReference type="RefSeq" id="YP_429834.1">
    <property type="nucleotide sequence ID" value="NC_007644.1"/>
</dbReference>
<dbReference type="SMR" id="Q2RJU8"/>
<dbReference type="STRING" id="264732.Moth_0976"/>
<dbReference type="EnsemblBacteria" id="ABC19291">
    <property type="protein sequence ID" value="ABC19291"/>
    <property type="gene ID" value="Moth_0976"/>
</dbReference>
<dbReference type="KEGG" id="mta:Moth_0976"/>
<dbReference type="PATRIC" id="fig|264732.11.peg.1050"/>
<dbReference type="eggNOG" id="COG0164">
    <property type="taxonomic scope" value="Bacteria"/>
</dbReference>
<dbReference type="HOGENOM" id="CLU_036532_3_2_9"/>
<dbReference type="OrthoDB" id="9803420at2"/>
<dbReference type="GO" id="GO:0005737">
    <property type="term" value="C:cytoplasm"/>
    <property type="evidence" value="ECO:0007669"/>
    <property type="project" value="UniProtKB-SubCell"/>
</dbReference>
<dbReference type="GO" id="GO:0032299">
    <property type="term" value="C:ribonuclease H2 complex"/>
    <property type="evidence" value="ECO:0007669"/>
    <property type="project" value="TreeGrafter"/>
</dbReference>
<dbReference type="GO" id="GO:0030145">
    <property type="term" value="F:manganese ion binding"/>
    <property type="evidence" value="ECO:0007669"/>
    <property type="project" value="UniProtKB-UniRule"/>
</dbReference>
<dbReference type="GO" id="GO:0003723">
    <property type="term" value="F:RNA binding"/>
    <property type="evidence" value="ECO:0007669"/>
    <property type="project" value="InterPro"/>
</dbReference>
<dbReference type="GO" id="GO:0004523">
    <property type="term" value="F:RNA-DNA hybrid ribonuclease activity"/>
    <property type="evidence" value="ECO:0007669"/>
    <property type="project" value="UniProtKB-UniRule"/>
</dbReference>
<dbReference type="GO" id="GO:0043137">
    <property type="term" value="P:DNA replication, removal of RNA primer"/>
    <property type="evidence" value="ECO:0007669"/>
    <property type="project" value="TreeGrafter"/>
</dbReference>
<dbReference type="GO" id="GO:0006298">
    <property type="term" value="P:mismatch repair"/>
    <property type="evidence" value="ECO:0007669"/>
    <property type="project" value="TreeGrafter"/>
</dbReference>
<dbReference type="CDD" id="cd07182">
    <property type="entry name" value="RNase_HII_bacteria_HII_like"/>
    <property type="match status" value="1"/>
</dbReference>
<dbReference type="Gene3D" id="3.30.420.10">
    <property type="entry name" value="Ribonuclease H-like superfamily/Ribonuclease H"/>
    <property type="match status" value="1"/>
</dbReference>
<dbReference type="HAMAP" id="MF_00052_B">
    <property type="entry name" value="RNase_HII_B"/>
    <property type="match status" value="1"/>
</dbReference>
<dbReference type="InterPro" id="IPR022898">
    <property type="entry name" value="RNase_HII"/>
</dbReference>
<dbReference type="InterPro" id="IPR001352">
    <property type="entry name" value="RNase_HII/HIII"/>
</dbReference>
<dbReference type="InterPro" id="IPR024567">
    <property type="entry name" value="RNase_HII/HIII_dom"/>
</dbReference>
<dbReference type="InterPro" id="IPR012337">
    <property type="entry name" value="RNaseH-like_sf"/>
</dbReference>
<dbReference type="InterPro" id="IPR036397">
    <property type="entry name" value="RNaseH_sf"/>
</dbReference>
<dbReference type="NCBIfam" id="NF000594">
    <property type="entry name" value="PRK00015.1-1"/>
    <property type="match status" value="1"/>
</dbReference>
<dbReference type="NCBIfam" id="NF000595">
    <property type="entry name" value="PRK00015.1-3"/>
    <property type="match status" value="1"/>
</dbReference>
<dbReference type="PANTHER" id="PTHR10954">
    <property type="entry name" value="RIBONUCLEASE H2 SUBUNIT A"/>
    <property type="match status" value="1"/>
</dbReference>
<dbReference type="PANTHER" id="PTHR10954:SF18">
    <property type="entry name" value="RIBONUCLEASE HII"/>
    <property type="match status" value="1"/>
</dbReference>
<dbReference type="Pfam" id="PF01351">
    <property type="entry name" value="RNase_HII"/>
    <property type="match status" value="1"/>
</dbReference>
<dbReference type="SUPFAM" id="SSF53098">
    <property type="entry name" value="Ribonuclease H-like"/>
    <property type="match status" value="1"/>
</dbReference>
<dbReference type="PROSITE" id="PS51975">
    <property type="entry name" value="RNASE_H_2"/>
    <property type="match status" value="1"/>
</dbReference>
<protein>
    <recommendedName>
        <fullName evidence="1">Ribonuclease HII</fullName>
        <shortName evidence="1">RNase HII</shortName>
        <ecNumber evidence="1">3.1.26.4</ecNumber>
    </recommendedName>
</protein>
<organism>
    <name type="scientific">Moorella thermoacetica (strain ATCC 39073 / JCM 9320)</name>
    <dbReference type="NCBI Taxonomy" id="264732"/>
    <lineage>
        <taxon>Bacteria</taxon>
        <taxon>Bacillati</taxon>
        <taxon>Bacillota</taxon>
        <taxon>Clostridia</taxon>
        <taxon>Moorellales</taxon>
        <taxon>Moorellaceae</taxon>
        <taxon>Moorella</taxon>
    </lineage>
</organism>
<comment type="function">
    <text evidence="1">Endonuclease that specifically degrades the RNA of RNA-DNA hybrids.</text>
</comment>
<comment type="catalytic activity">
    <reaction evidence="1">
        <text>Endonucleolytic cleavage to 5'-phosphomonoester.</text>
        <dbReference type="EC" id="3.1.26.4"/>
    </reaction>
</comment>
<comment type="cofactor">
    <cofactor evidence="1">
        <name>Mn(2+)</name>
        <dbReference type="ChEBI" id="CHEBI:29035"/>
    </cofactor>
    <cofactor evidence="1">
        <name>Mg(2+)</name>
        <dbReference type="ChEBI" id="CHEBI:18420"/>
    </cofactor>
    <text evidence="1">Manganese or magnesium. Binds 1 divalent metal ion per monomer in the absence of substrate. May bind a second metal ion after substrate binding.</text>
</comment>
<comment type="subcellular location">
    <subcellularLocation>
        <location evidence="1">Cytoplasm</location>
    </subcellularLocation>
</comment>
<comment type="similarity">
    <text evidence="1">Belongs to the RNase HII family.</text>
</comment>
<name>RNH2_MOOTA</name>
<accession>Q2RJU8</accession>
<keyword id="KW-0963">Cytoplasm</keyword>
<keyword id="KW-0255">Endonuclease</keyword>
<keyword id="KW-0378">Hydrolase</keyword>
<keyword id="KW-0464">Manganese</keyword>
<keyword id="KW-0479">Metal-binding</keyword>
<keyword id="KW-0540">Nuclease</keyword>
<feature type="chain" id="PRO_0000235736" description="Ribonuclease HII">
    <location>
        <begin position="1"/>
        <end position="206"/>
    </location>
</feature>
<feature type="domain" description="RNase H type-2" evidence="2">
    <location>
        <begin position="27"/>
        <end position="206"/>
    </location>
</feature>
<feature type="binding site" evidence="1">
    <location>
        <position position="33"/>
    </location>
    <ligand>
        <name>a divalent metal cation</name>
        <dbReference type="ChEBI" id="CHEBI:60240"/>
    </ligand>
</feature>
<feature type="binding site" evidence="1">
    <location>
        <position position="34"/>
    </location>
    <ligand>
        <name>a divalent metal cation</name>
        <dbReference type="ChEBI" id="CHEBI:60240"/>
    </ligand>
</feature>
<feature type="binding site" evidence="1">
    <location>
        <position position="125"/>
    </location>
    <ligand>
        <name>a divalent metal cation</name>
        <dbReference type="ChEBI" id="CHEBI:60240"/>
    </ligand>
</feature>
<reference key="1">
    <citation type="journal article" date="2008" name="Environ. Microbiol.">
        <title>The complete genome sequence of Moorella thermoacetica (f. Clostridium thermoaceticum).</title>
        <authorList>
            <person name="Pierce E."/>
            <person name="Xie G."/>
            <person name="Barabote R.D."/>
            <person name="Saunders E."/>
            <person name="Han C.S."/>
            <person name="Detter J.C."/>
            <person name="Richardson P."/>
            <person name="Brettin T.S."/>
            <person name="Das A."/>
            <person name="Ljungdahl L.G."/>
            <person name="Ragsdale S.W."/>
        </authorList>
    </citation>
    <scope>NUCLEOTIDE SEQUENCE [LARGE SCALE GENOMIC DNA]</scope>
    <source>
        <strain>ATCC 39073 / JCM 9320</strain>
    </source>
</reference>